<dbReference type="EMBL" id="M19416">
    <property type="protein sequence ID" value="AAA33225.1"/>
    <property type="molecule type" value="mRNA"/>
</dbReference>
<dbReference type="EMBL" id="X51947">
    <property type="protein sequence ID" value="CAA36209.1"/>
    <property type="molecule type" value="Genomic_DNA"/>
</dbReference>
<dbReference type="EMBL" id="AAFI02000005">
    <property type="protein sequence ID" value="EAL71935.1"/>
    <property type="molecule type" value="Genomic_DNA"/>
</dbReference>
<dbReference type="PIR" id="S14689">
    <property type="entry name" value="BWDOP8"/>
</dbReference>
<dbReference type="RefSeq" id="XP_646471.1">
    <property type="nucleotide sequence ID" value="XM_641379.1"/>
</dbReference>
<dbReference type="SMR" id="P11022"/>
<dbReference type="PaxDb" id="44689-DDB0191109"/>
<dbReference type="EnsemblProtists" id="EAL71935">
    <property type="protein sequence ID" value="EAL71935"/>
    <property type="gene ID" value="DDB_G0269170"/>
</dbReference>
<dbReference type="GeneID" id="8617432"/>
<dbReference type="KEGG" id="ddi:DDB_G0269170"/>
<dbReference type="dictyBase" id="DDB_G0269170">
    <property type="gene designation" value="pmpA"/>
</dbReference>
<dbReference type="VEuPathDB" id="AmoebaDB:DDB_G0269170"/>
<dbReference type="eggNOG" id="ENOG502SF3W">
    <property type="taxonomic scope" value="Eukaryota"/>
</dbReference>
<dbReference type="HOGENOM" id="CLU_1858994_0_0_1"/>
<dbReference type="InParanoid" id="P11022"/>
<dbReference type="OMA" id="FYTYWFG"/>
<dbReference type="PRO" id="PR:P11022"/>
<dbReference type="Proteomes" id="UP000002195">
    <property type="component" value="Chromosome 1"/>
</dbReference>
<dbReference type="GO" id="GO:0000139">
    <property type="term" value="C:Golgi membrane"/>
    <property type="evidence" value="ECO:0000318"/>
    <property type="project" value="GO_Central"/>
</dbReference>
<dbReference type="GO" id="GO:0016192">
    <property type="term" value="P:vesicle-mediated transport"/>
    <property type="evidence" value="ECO:0000318"/>
    <property type="project" value="GO_Central"/>
</dbReference>
<dbReference type="InterPro" id="IPR013714">
    <property type="entry name" value="Golgi_TVP15"/>
</dbReference>
<dbReference type="PANTHER" id="PTHR28128">
    <property type="entry name" value="GOLGI APPARATUS MEMBRANE PROTEIN TVP15"/>
    <property type="match status" value="1"/>
</dbReference>
<dbReference type="PANTHER" id="PTHR28128:SF1">
    <property type="entry name" value="GOLGI APPARATUS MEMBRANE PROTEIN TVP15"/>
    <property type="match status" value="1"/>
</dbReference>
<dbReference type="Pfam" id="PF08507">
    <property type="entry name" value="COPI_assoc"/>
    <property type="match status" value="1"/>
</dbReference>
<organism>
    <name type="scientific">Dictyostelium discoideum</name>
    <name type="common">Social amoeba</name>
    <dbReference type="NCBI Taxonomy" id="44689"/>
    <lineage>
        <taxon>Eukaryota</taxon>
        <taxon>Amoebozoa</taxon>
        <taxon>Evosea</taxon>
        <taxon>Eumycetozoa</taxon>
        <taxon>Dictyostelia</taxon>
        <taxon>Dictyosteliales</taxon>
        <taxon>Dictyosteliaceae</taxon>
        <taxon>Dictyostelium</taxon>
    </lineage>
</organism>
<sequence>MSQSTAYIILNILVILAGCFITACGIYLFVNGLFHSIIGFVLGIYYLLAGVCIVLLEIVFPQKLVNLFGFYTYWFGKGALISLIGLLILGNSGFFLAAGIIVIAVGIVCMIFHFLLGCPRPLINRSVERKPEPQGQHA</sequence>
<keyword id="KW-0472">Membrane</keyword>
<keyword id="KW-1185">Reference proteome</keyword>
<keyword id="KW-0812">Transmembrane</keyword>
<keyword id="KW-1133">Transmembrane helix</keyword>
<accession>P11022</accession>
<accession>Q55CL0</accession>
<comment type="subcellular location">
    <subcellularLocation>
        <location evidence="2">Membrane</location>
        <topology evidence="2">Multi-pass membrane protein</topology>
    </subcellularLocation>
</comment>
<comment type="induction">
    <text>Developmentally regulated, is also induced by heat shock and cold shock.</text>
</comment>
<proteinExistence type="evidence at transcript level"/>
<name>P8A7_DICDI</name>
<evidence type="ECO:0000255" key="1"/>
<evidence type="ECO:0000305" key="2"/>
<reference key="1">
    <citation type="journal article" date="1988" name="Mol. Cell. Biol.">
        <title>A developmentally regulated membrane protein gene in Dictyostelium discoideum is also induced by heat shock and cold shock.</title>
        <authorList>
            <person name="Maniak M."/>
            <person name="Nellen W."/>
        </authorList>
    </citation>
    <scope>NUCLEOTIDE SEQUENCE [MRNA]</scope>
    <source>
        <strain>AX2</strain>
    </source>
</reference>
<reference key="2">
    <citation type="journal article" date="1990" name="Nucleic Acids Res.">
        <title>Two separable promoters control different aspects of expression of a Dictyostelium gene.</title>
        <authorList>
            <person name="Maniak M."/>
            <person name="Nellen W."/>
        </authorList>
    </citation>
    <scope>NUCLEOTIDE SEQUENCE [GENOMIC DNA]</scope>
    <source>
        <strain>AX2</strain>
    </source>
</reference>
<reference key="3">
    <citation type="journal article" date="1990" name="Nucleic Acids Res.">
        <title>Evidence for a feedback regulated back-up promoter which controls permanent expression of a Dictyostelium gene.</title>
        <authorList>
            <person name="Maniak M."/>
            <person name="Nellen W."/>
        </authorList>
    </citation>
    <scope>NUCLEOTIDE SEQUENCE [GENOMIC DNA]</scope>
    <source>
        <strain>AX2</strain>
    </source>
</reference>
<reference key="4">
    <citation type="journal article" date="2005" name="Nature">
        <title>The genome of the social amoeba Dictyostelium discoideum.</title>
        <authorList>
            <person name="Eichinger L."/>
            <person name="Pachebat J.A."/>
            <person name="Gloeckner G."/>
            <person name="Rajandream M.A."/>
            <person name="Sucgang R."/>
            <person name="Berriman M."/>
            <person name="Song J."/>
            <person name="Olsen R."/>
            <person name="Szafranski K."/>
            <person name="Xu Q."/>
            <person name="Tunggal B."/>
            <person name="Kummerfeld S."/>
            <person name="Madera M."/>
            <person name="Konfortov B.A."/>
            <person name="Rivero F."/>
            <person name="Bankier A.T."/>
            <person name="Lehmann R."/>
            <person name="Hamlin N."/>
            <person name="Davies R."/>
            <person name="Gaudet P."/>
            <person name="Fey P."/>
            <person name="Pilcher K."/>
            <person name="Chen G."/>
            <person name="Saunders D."/>
            <person name="Sodergren E.J."/>
            <person name="Davis P."/>
            <person name="Kerhornou A."/>
            <person name="Nie X."/>
            <person name="Hall N."/>
            <person name="Anjard C."/>
            <person name="Hemphill L."/>
            <person name="Bason N."/>
            <person name="Farbrother P."/>
            <person name="Desany B."/>
            <person name="Just E."/>
            <person name="Morio T."/>
            <person name="Rost R."/>
            <person name="Churcher C.M."/>
            <person name="Cooper J."/>
            <person name="Haydock S."/>
            <person name="van Driessche N."/>
            <person name="Cronin A."/>
            <person name="Goodhead I."/>
            <person name="Muzny D.M."/>
            <person name="Mourier T."/>
            <person name="Pain A."/>
            <person name="Lu M."/>
            <person name="Harper D."/>
            <person name="Lindsay R."/>
            <person name="Hauser H."/>
            <person name="James K.D."/>
            <person name="Quiles M."/>
            <person name="Madan Babu M."/>
            <person name="Saito T."/>
            <person name="Buchrieser C."/>
            <person name="Wardroper A."/>
            <person name="Felder M."/>
            <person name="Thangavelu M."/>
            <person name="Johnson D."/>
            <person name="Knights A."/>
            <person name="Loulseged H."/>
            <person name="Mungall K.L."/>
            <person name="Oliver K."/>
            <person name="Price C."/>
            <person name="Quail M.A."/>
            <person name="Urushihara H."/>
            <person name="Hernandez J."/>
            <person name="Rabbinowitsch E."/>
            <person name="Steffen D."/>
            <person name="Sanders M."/>
            <person name="Ma J."/>
            <person name="Kohara Y."/>
            <person name="Sharp S."/>
            <person name="Simmonds M.N."/>
            <person name="Spiegler S."/>
            <person name="Tivey A."/>
            <person name="Sugano S."/>
            <person name="White B."/>
            <person name="Walker D."/>
            <person name="Woodward J.R."/>
            <person name="Winckler T."/>
            <person name="Tanaka Y."/>
            <person name="Shaulsky G."/>
            <person name="Schleicher M."/>
            <person name="Weinstock G.M."/>
            <person name="Rosenthal A."/>
            <person name="Cox E.C."/>
            <person name="Chisholm R.L."/>
            <person name="Gibbs R.A."/>
            <person name="Loomis W.F."/>
            <person name="Platzer M."/>
            <person name="Kay R.R."/>
            <person name="Williams J.G."/>
            <person name="Dear P.H."/>
            <person name="Noegel A.A."/>
            <person name="Barrell B.G."/>
            <person name="Kuspa A."/>
        </authorList>
    </citation>
    <scope>NUCLEOTIDE SEQUENCE [LARGE SCALE GENOMIC DNA]</scope>
    <source>
        <strain>AX4</strain>
    </source>
</reference>
<protein>
    <recommendedName>
        <fullName>Membrane protein P8A7</fullName>
    </recommendedName>
</protein>
<feature type="chain" id="PRO_0000058148" description="Membrane protein P8A7">
    <location>
        <begin position="1"/>
        <end position="138"/>
    </location>
</feature>
<feature type="transmembrane region" description="Helical" evidence="1">
    <location>
        <begin position="12"/>
        <end position="30"/>
    </location>
</feature>
<feature type="transmembrane region" description="Helical" evidence="1">
    <location>
        <begin position="32"/>
        <end position="56"/>
    </location>
</feature>
<feature type="transmembrane region" description="Helical" evidence="1">
    <location>
        <begin position="71"/>
        <end position="90"/>
    </location>
</feature>
<feature type="transmembrane region" description="Helical" evidence="1">
    <location>
        <begin position="93"/>
        <end position="118"/>
    </location>
</feature>
<gene>
    <name type="primary">pmpA</name>
    <name type="synonym">P8A7</name>
    <name type="ORF">DDB_G0269170</name>
</gene>